<proteinExistence type="inferred from homology"/>
<organism>
    <name type="scientific">Phaeosphaeria nodorum (strain SN15 / ATCC MYA-4574 / FGSC 10173)</name>
    <name type="common">Glume blotch fungus</name>
    <name type="synonym">Parastagonospora nodorum</name>
    <dbReference type="NCBI Taxonomy" id="321614"/>
    <lineage>
        <taxon>Eukaryota</taxon>
        <taxon>Fungi</taxon>
        <taxon>Dikarya</taxon>
        <taxon>Ascomycota</taxon>
        <taxon>Pezizomycotina</taxon>
        <taxon>Dothideomycetes</taxon>
        <taxon>Pleosporomycetidae</taxon>
        <taxon>Pleosporales</taxon>
        <taxon>Pleosporineae</taxon>
        <taxon>Phaeosphaeriaceae</taxon>
        <taxon>Parastagonospora</taxon>
    </lineage>
</organism>
<comment type="function">
    <text evidence="1">Catalytic subunit of the SLX1-SLX4 structure-specific endonuclease that resolves DNA secondary structures generated during DNA repair and recombination. Has endonuclease activity towards branched DNA substrates, introducing single-strand cuts in duplex DNA close to junctions with ss-DNA.</text>
</comment>
<comment type="cofactor">
    <cofactor evidence="1">
        <name>a divalent metal cation</name>
        <dbReference type="ChEBI" id="CHEBI:60240"/>
    </cofactor>
</comment>
<comment type="subunit">
    <text evidence="1">Forms a heterodimer with SLX4.</text>
</comment>
<comment type="subcellular location">
    <subcellularLocation>
        <location evidence="1">Nucleus</location>
    </subcellularLocation>
</comment>
<comment type="similarity">
    <text evidence="1">Belongs to the SLX1 family.</text>
</comment>
<comment type="sequence caution" evidence="3">
    <conflict type="erroneous gene model prediction">
        <sequence resource="EMBL-CDS" id="EAT81697"/>
    </conflict>
</comment>
<evidence type="ECO:0000255" key="1">
    <source>
        <dbReference type="HAMAP-Rule" id="MF_03100"/>
    </source>
</evidence>
<evidence type="ECO:0000256" key="2">
    <source>
        <dbReference type="SAM" id="MobiDB-lite"/>
    </source>
</evidence>
<evidence type="ECO:0000305" key="3"/>
<reference key="1">
    <citation type="journal article" date="2007" name="Plant Cell">
        <title>Dothideomycete-plant interactions illuminated by genome sequencing and EST analysis of the wheat pathogen Stagonospora nodorum.</title>
        <authorList>
            <person name="Hane J.K."/>
            <person name="Lowe R.G.T."/>
            <person name="Solomon P.S."/>
            <person name="Tan K.-C."/>
            <person name="Schoch C.L."/>
            <person name="Spatafora J.W."/>
            <person name="Crous P.W."/>
            <person name="Kodira C.D."/>
            <person name="Birren B.W."/>
            <person name="Galagan J.E."/>
            <person name="Torriani S.F.F."/>
            <person name="McDonald B.A."/>
            <person name="Oliver R.P."/>
        </authorList>
    </citation>
    <scope>NUCLEOTIDE SEQUENCE [LARGE SCALE GENOMIC DNA]</scope>
    <source>
        <strain>SN15 / ATCC MYA-4574 / FGSC 10173</strain>
    </source>
</reference>
<feature type="chain" id="PRO_0000383794" description="Structure-specific endonuclease subunit SLX1">
    <location>
        <begin position="1"/>
        <end position="366"/>
    </location>
</feature>
<feature type="domain" description="GIY-YIG" evidence="1">
    <location>
        <begin position="14"/>
        <end position="95"/>
    </location>
</feature>
<feature type="zinc finger region" description="SLX1-type" evidence="1">
    <location>
        <begin position="234"/>
        <end position="289"/>
    </location>
</feature>
<feature type="region of interest" description="Disordered" evidence="2">
    <location>
        <begin position="31"/>
        <end position="59"/>
    </location>
</feature>
<feature type="region of interest" description="Disordered" evidence="2">
    <location>
        <begin position="102"/>
        <end position="124"/>
    </location>
</feature>
<feature type="region of interest" description="Disordered" evidence="2">
    <location>
        <begin position="317"/>
        <end position="366"/>
    </location>
</feature>
<feature type="compositionally biased region" description="Basic residues" evidence="2">
    <location>
        <begin position="109"/>
        <end position="123"/>
    </location>
</feature>
<feature type="compositionally biased region" description="Acidic residues" evidence="2">
    <location>
        <begin position="339"/>
        <end position="359"/>
    </location>
</feature>
<dbReference type="EC" id="3.1.-.-" evidence="1"/>
<dbReference type="EMBL" id="CH445342">
    <property type="protein sequence ID" value="EAT81697.2"/>
    <property type="status" value="ALT_SEQ"/>
    <property type="molecule type" value="Genomic_DNA"/>
</dbReference>
<dbReference type="RefSeq" id="XP_001801442.1">
    <property type="nucleotide sequence ID" value="XM_001801390.1"/>
</dbReference>
<dbReference type="SMR" id="Q0UAL6"/>
<dbReference type="FunCoup" id="Q0UAL6">
    <property type="interactions" value="362"/>
</dbReference>
<dbReference type="STRING" id="321614.Q0UAL6"/>
<dbReference type="GeneID" id="5978350"/>
<dbReference type="KEGG" id="pno:SNOG_11198"/>
<dbReference type="VEuPathDB" id="FungiDB:JI435_111980"/>
<dbReference type="InParanoid" id="Q0UAL6"/>
<dbReference type="OrthoDB" id="24645at2759"/>
<dbReference type="Proteomes" id="UP000001055">
    <property type="component" value="Unassembled WGS sequence"/>
</dbReference>
<dbReference type="GO" id="GO:0033557">
    <property type="term" value="C:Slx1-Slx4 complex"/>
    <property type="evidence" value="ECO:0000318"/>
    <property type="project" value="GO_Central"/>
</dbReference>
<dbReference type="GO" id="GO:0017108">
    <property type="term" value="F:5'-flap endonuclease activity"/>
    <property type="evidence" value="ECO:0000318"/>
    <property type="project" value="GO_Central"/>
</dbReference>
<dbReference type="GO" id="GO:0008821">
    <property type="term" value="F:crossover junction DNA endonuclease activity"/>
    <property type="evidence" value="ECO:0000318"/>
    <property type="project" value="GO_Central"/>
</dbReference>
<dbReference type="GO" id="GO:0008270">
    <property type="term" value="F:zinc ion binding"/>
    <property type="evidence" value="ECO:0007669"/>
    <property type="project" value="UniProtKB-KW"/>
</dbReference>
<dbReference type="GO" id="GO:0000724">
    <property type="term" value="P:double-strand break repair via homologous recombination"/>
    <property type="evidence" value="ECO:0000318"/>
    <property type="project" value="GO_Central"/>
</dbReference>
<dbReference type="CDD" id="cd10455">
    <property type="entry name" value="GIY-YIG_SLX1"/>
    <property type="match status" value="1"/>
</dbReference>
<dbReference type="FunFam" id="3.40.1440.10:FF:000006">
    <property type="entry name" value="Structure-specific endonuclease subunit SLX1"/>
    <property type="match status" value="1"/>
</dbReference>
<dbReference type="Gene3D" id="3.40.1440.10">
    <property type="entry name" value="GIY-YIG endonuclease"/>
    <property type="match status" value="1"/>
</dbReference>
<dbReference type="Gene3D" id="3.30.40.10">
    <property type="entry name" value="Zinc/RING finger domain, C3HC4 (zinc finger)"/>
    <property type="match status" value="1"/>
</dbReference>
<dbReference type="HAMAP" id="MF_03100">
    <property type="entry name" value="Endonuc_su_Slx1"/>
    <property type="match status" value="1"/>
</dbReference>
<dbReference type="InterPro" id="IPR000305">
    <property type="entry name" value="GIY-YIG_endonuc"/>
</dbReference>
<dbReference type="InterPro" id="IPR035901">
    <property type="entry name" value="GIY-YIG_endonuc_sf"/>
</dbReference>
<dbReference type="InterPro" id="IPR027520">
    <property type="entry name" value="Slx1"/>
</dbReference>
<dbReference type="InterPro" id="IPR048749">
    <property type="entry name" value="SLX1_C"/>
</dbReference>
<dbReference type="InterPro" id="IPR050381">
    <property type="entry name" value="SLX1_endonuclease"/>
</dbReference>
<dbReference type="InterPro" id="IPR013083">
    <property type="entry name" value="Znf_RING/FYVE/PHD"/>
</dbReference>
<dbReference type="PANTHER" id="PTHR20208">
    <property type="entry name" value="STRUCTURE-SPECIFIC ENDONUCLEASE SUBUNIT SLX1"/>
    <property type="match status" value="1"/>
</dbReference>
<dbReference type="PANTHER" id="PTHR20208:SF10">
    <property type="entry name" value="STRUCTURE-SPECIFIC ENDONUCLEASE SUBUNIT SLX1"/>
    <property type="match status" value="1"/>
</dbReference>
<dbReference type="Pfam" id="PF01541">
    <property type="entry name" value="GIY-YIG"/>
    <property type="match status" value="1"/>
</dbReference>
<dbReference type="Pfam" id="PF21202">
    <property type="entry name" value="SLX1_C"/>
    <property type="match status" value="1"/>
</dbReference>
<dbReference type="SUPFAM" id="SSF82771">
    <property type="entry name" value="GIY-YIG endonuclease"/>
    <property type="match status" value="1"/>
</dbReference>
<dbReference type="PROSITE" id="PS50164">
    <property type="entry name" value="GIY_YIG"/>
    <property type="match status" value="1"/>
</dbReference>
<name>SLX1_PHANO</name>
<sequence>MSEALKIESRPIPAFYCCYLLRSKNRKSYYIGSTPNPARRLGQHNGSSKGGAKRTSMQGKRPWEMTCIVTGFPSKFAALQFEWAWQNTHATRHIDKDVRDARAEELQKGKKKATSPGRRRKRPPMSLEARLKNLHHLLSVDSFCRWPLNLRFFAPDVFVQWERHTTKMTTTLRKSITIQLTPAEIPKLASDVSTELQTHFIPEVIRAIPVAYEDCKQYIEKSRRVLEDDQRLGCGVCKNPADMSSSLILVCPIEACQTVSHLSCLSNKFLTEGGELETLVPLEGTCPGCRSCIKWATMIKELSLRTNGEEELKLLFKPKRKRKSDNPAESDAADGQALEQEDEELDETWMEDMSQDEEPSPVKKSR</sequence>
<gene>
    <name evidence="1" type="primary">SLX1</name>
    <name type="ORF">SNOG_11198</name>
</gene>
<keyword id="KW-0227">DNA damage</keyword>
<keyword id="KW-0233">DNA recombination</keyword>
<keyword id="KW-0234">DNA repair</keyword>
<keyword id="KW-0255">Endonuclease</keyword>
<keyword id="KW-0378">Hydrolase</keyword>
<keyword id="KW-0479">Metal-binding</keyword>
<keyword id="KW-0540">Nuclease</keyword>
<keyword id="KW-0539">Nucleus</keyword>
<keyword id="KW-0862">Zinc</keyword>
<keyword id="KW-0863">Zinc-finger</keyword>
<accession>Q0UAL6</accession>
<protein>
    <recommendedName>
        <fullName evidence="1">Structure-specific endonuclease subunit SLX1</fullName>
        <ecNumber evidence="1">3.1.-.-</ecNumber>
    </recommendedName>
</protein>